<organism>
    <name type="scientific">Paramagnetospirillum magneticum (strain ATCC 700264 / AMB-1)</name>
    <name type="common">Magnetospirillum magneticum</name>
    <dbReference type="NCBI Taxonomy" id="342108"/>
    <lineage>
        <taxon>Bacteria</taxon>
        <taxon>Pseudomonadati</taxon>
        <taxon>Pseudomonadota</taxon>
        <taxon>Alphaproteobacteria</taxon>
        <taxon>Rhodospirillales</taxon>
        <taxon>Magnetospirillaceae</taxon>
        <taxon>Paramagnetospirillum</taxon>
    </lineage>
</organism>
<sequence>MSIRLLPPTLVNQIAAGEVVERPASAVKELVENAIDAGASRIDVVLAEGGQSLIAVSDDGCGMSPDEMMLAVERHATSKLPDDDLVRIRFLGFRGEALPSIGSVARLTLTSRPRGADSAWSLSVEGGAKGRPVPAAHPQGTRIEVRDLFYATPARLKFLKAARTELTHAADVIERLGMAHPDIAFSLSDGGRKVLDLAAKRGEPGAALLSRIAQVVGREFEPNALALDAERDGVRLTGWAGLPTYNRATSAAQYLFVNGRPVKDRLVIGAVRGAYQDVLARDRHPVVALFLELDPDQVDVNVHPAKAEVRFRDSGLVRGLIVGAIRHALAGAGHRASSTLTGVALGALGGGGGNSPPPSFAHYPPPRPSLPLIRAGIGAQAPLGLAEQGLGLHLPPAAPVAPPEAREGPGEASVDYPLGAAKAQLHDTYIVAETADGLVIVDQHAAHERLVFERLKLGLTEGQVARQGLLLPEVVDLGDAGAARVTERAGDLARLGLVIDSFGPGAVVVREVPALLGDDDVQGLVRDLADELAEWGASTVLEERLLHICATMACHGSVRAGRRLSVPEMNALLRRMEATPLSGQCNHGRPTHVSLSLNDIEKLFGRR</sequence>
<keyword id="KW-0227">DNA damage</keyword>
<keyword id="KW-0234">DNA repair</keyword>
<comment type="function">
    <text evidence="1">This protein is involved in the repair of mismatches in DNA. It is required for dam-dependent methyl-directed DNA mismatch repair. May act as a 'molecular matchmaker', a protein that promotes the formation of a stable complex between two or more DNA-binding proteins in an ATP-dependent manner without itself being part of a final effector complex.</text>
</comment>
<comment type="similarity">
    <text evidence="1">Belongs to the DNA mismatch repair MutL/HexB family.</text>
</comment>
<proteinExistence type="inferred from homology"/>
<dbReference type="EMBL" id="AP007255">
    <property type="protein sequence ID" value="BAE53220.1"/>
    <property type="molecule type" value="Genomic_DNA"/>
</dbReference>
<dbReference type="RefSeq" id="WP_011386761.1">
    <property type="nucleotide sequence ID" value="NC_007626.1"/>
</dbReference>
<dbReference type="SMR" id="Q2VYV5"/>
<dbReference type="STRING" id="342108.amb4416"/>
<dbReference type="KEGG" id="mag:amb4416"/>
<dbReference type="HOGENOM" id="CLU_004131_4_2_5"/>
<dbReference type="OrthoDB" id="9763467at2"/>
<dbReference type="Proteomes" id="UP000007058">
    <property type="component" value="Chromosome"/>
</dbReference>
<dbReference type="GO" id="GO:0032300">
    <property type="term" value="C:mismatch repair complex"/>
    <property type="evidence" value="ECO:0007669"/>
    <property type="project" value="InterPro"/>
</dbReference>
<dbReference type="GO" id="GO:0005524">
    <property type="term" value="F:ATP binding"/>
    <property type="evidence" value="ECO:0007669"/>
    <property type="project" value="InterPro"/>
</dbReference>
<dbReference type="GO" id="GO:0016887">
    <property type="term" value="F:ATP hydrolysis activity"/>
    <property type="evidence" value="ECO:0007669"/>
    <property type="project" value="InterPro"/>
</dbReference>
<dbReference type="GO" id="GO:0140664">
    <property type="term" value="F:ATP-dependent DNA damage sensor activity"/>
    <property type="evidence" value="ECO:0007669"/>
    <property type="project" value="InterPro"/>
</dbReference>
<dbReference type="GO" id="GO:0030983">
    <property type="term" value="F:mismatched DNA binding"/>
    <property type="evidence" value="ECO:0007669"/>
    <property type="project" value="InterPro"/>
</dbReference>
<dbReference type="GO" id="GO:0006298">
    <property type="term" value="P:mismatch repair"/>
    <property type="evidence" value="ECO:0007669"/>
    <property type="project" value="UniProtKB-UniRule"/>
</dbReference>
<dbReference type="CDD" id="cd16926">
    <property type="entry name" value="HATPase_MutL-MLH-PMS-like"/>
    <property type="match status" value="1"/>
</dbReference>
<dbReference type="CDD" id="cd03482">
    <property type="entry name" value="MutL_Trans_MutL"/>
    <property type="match status" value="1"/>
</dbReference>
<dbReference type="FunFam" id="3.30.565.10:FF:000003">
    <property type="entry name" value="DNA mismatch repair endonuclease MutL"/>
    <property type="match status" value="1"/>
</dbReference>
<dbReference type="Gene3D" id="3.30.230.10">
    <property type="match status" value="1"/>
</dbReference>
<dbReference type="Gene3D" id="3.30.565.10">
    <property type="entry name" value="Histidine kinase-like ATPase, C-terminal domain"/>
    <property type="match status" value="1"/>
</dbReference>
<dbReference type="Gene3D" id="3.30.1540.20">
    <property type="entry name" value="MutL, C-terminal domain, dimerisation subdomain"/>
    <property type="match status" value="1"/>
</dbReference>
<dbReference type="Gene3D" id="3.30.1370.100">
    <property type="entry name" value="MutL, C-terminal domain, regulatory subdomain"/>
    <property type="match status" value="1"/>
</dbReference>
<dbReference type="HAMAP" id="MF_00149">
    <property type="entry name" value="DNA_mis_repair"/>
    <property type="match status" value="1"/>
</dbReference>
<dbReference type="InterPro" id="IPR014762">
    <property type="entry name" value="DNA_mismatch_repair_CS"/>
</dbReference>
<dbReference type="InterPro" id="IPR020667">
    <property type="entry name" value="DNA_mismatch_repair_MutL"/>
</dbReference>
<dbReference type="InterPro" id="IPR013507">
    <property type="entry name" value="DNA_mismatch_S5_2-like"/>
</dbReference>
<dbReference type="InterPro" id="IPR036890">
    <property type="entry name" value="HATPase_C_sf"/>
</dbReference>
<dbReference type="InterPro" id="IPR002099">
    <property type="entry name" value="MutL/Mlh/PMS"/>
</dbReference>
<dbReference type="InterPro" id="IPR038973">
    <property type="entry name" value="MutL/Mlh/Pms-like"/>
</dbReference>
<dbReference type="InterPro" id="IPR014790">
    <property type="entry name" value="MutL_C"/>
</dbReference>
<dbReference type="InterPro" id="IPR042120">
    <property type="entry name" value="MutL_C_dimsub"/>
</dbReference>
<dbReference type="InterPro" id="IPR042121">
    <property type="entry name" value="MutL_C_regsub"/>
</dbReference>
<dbReference type="InterPro" id="IPR037198">
    <property type="entry name" value="MutL_C_sf"/>
</dbReference>
<dbReference type="InterPro" id="IPR020568">
    <property type="entry name" value="Ribosomal_Su5_D2-typ_SF"/>
</dbReference>
<dbReference type="InterPro" id="IPR014721">
    <property type="entry name" value="Ribsml_uS5_D2-typ_fold_subgr"/>
</dbReference>
<dbReference type="NCBIfam" id="TIGR00585">
    <property type="entry name" value="mutl"/>
    <property type="match status" value="1"/>
</dbReference>
<dbReference type="NCBIfam" id="NF000953">
    <property type="entry name" value="PRK00095.2-4"/>
    <property type="match status" value="1"/>
</dbReference>
<dbReference type="PANTHER" id="PTHR10073">
    <property type="entry name" value="DNA MISMATCH REPAIR PROTEIN MLH, PMS, MUTL"/>
    <property type="match status" value="1"/>
</dbReference>
<dbReference type="PANTHER" id="PTHR10073:SF12">
    <property type="entry name" value="DNA MISMATCH REPAIR PROTEIN MLH1"/>
    <property type="match status" value="1"/>
</dbReference>
<dbReference type="Pfam" id="PF01119">
    <property type="entry name" value="DNA_mis_repair"/>
    <property type="match status" value="1"/>
</dbReference>
<dbReference type="Pfam" id="PF13589">
    <property type="entry name" value="HATPase_c_3"/>
    <property type="match status" value="1"/>
</dbReference>
<dbReference type="Pfam" id="PF08676">
    <property type="entry name" value="MutL_C"/>
    <property type="match status" value="1"/>
</dbReference>
<dbReference type="SMART" id="SM01340">
    <property type="entry name" value="DNA_mis_repair"/>
    <property type="match status" value="1"/>
</dbReference>
<dbReference type="SMART" id="SM00853">
    <property type="entry name" value="MutL_C"/>
    <property type="match status" value="1"/>
</dbReference>
<dbReference type="SUPFAM" id="SSF55874">
    <property type="entry name" value="ATPase domain of HSP90 chaperone/DNA topoisomerase II/histidine kinase"/>
    <property type="match status" value="1"/>
</dbReference>
<dbReference type="SUPFAM" id="SSF118116">
    <property type="entry name" value="DNA mismatch repair protein MutL"/>
    <property type="match status" value="1"/>
</dbReference>
<dbReference type="SUPFAM" id="SSF54211">
    <property type="entry name" value="Ribosomal protein S5 domain 2-like"/>
    <property type="match status" value="1"/>
</dbReference>
<dbReference type="PROSITE" id="PS00058">
    <property type="entry name" value="DNA_MISMATCH_REPAIR_1"/>
    <property type="match status" value="1"/>
</dbReference>
<feature type="chain" id="PRO_1000010040" description="DNA mismatch repair protein MutL">
    <location>
        <begin position="1"/>
        <end position="607"/>
    </location>
</feature>
<name>MUTL_PARM1</name>
<protein>
    <recommendedName>
        <fullName evidence="1">DNA mismatch repair protein MutL</fullName>
    </recommendedName>
</protein>
<reference key="1">
    <citation type="journal article" date="2005" name="DNA Res.">
        <title>Complete genome sequence of the facultative anaerobic magnetotactic bacterium Magnetospirillum sp. strain AMB-1.</title>
        <authorList>
            <person name="Matsunaga T."/>
            <person name="Okamura Y."/>
            <person name="Fukuda Y."/>
            <person name="Wahyudi A.T."/>
            <person name="Murase Y."/>
            <person name="Takeyama H."/>
        </authorList>
    </citation>
    <scope>NUCLEOTIDE SEQUENCE [LARGE SCALE GENOMIC DNA]</scope>
    <source>
        <strain>ATCC 700264 / AMB-1</strain>
    </source>
</reference>
<gene>
    <name evidence="1" type="primary">mutL</name>
    <name type="ordered locus">amb4416</name>
</gene>
<evidence type="ECO:0000255" key="1">
    <source>
        <dbReference type="HAMAP-Rule" id="MF_00149"/>
    </source>
</evidence>
<accession>Q2VYV5</accession>